<evidence type="ECO:0000255" key="1"/>
<evidence type="ECO:0000255" key="2">
    <source>
        <dbReference type="PROSITE-ProRule" id="PRU00099"/>
    </source>
</evidence>
<evidence type="ECO:0000255" key="3">
    <source>
        <dbReference type="PROSITE-ProRule" id="PRU00102"/>
    </source>
</evidence>
<evidence type="ECO:0000305" key="4"/>
<proteinExistence type="inferred from homology"/>
<keyword id="KW-1003">Cell membrane</keyword>
<keyword id="KW-0472">Membrane</keyword>
<keyword id="KW-1185">Reference proteome</keyword>
<keyword id="KW-0812">Transmembrane</keyword>
<keyword id="KW-1133">Transmembrane helix</keyword>
<accession>P63528</accession>
<accession>A0A1R3XY11</accession>
<accession>Q10631</accession>
<accession>X2BHJ8</accession>
<gene>
    <name type="ordered locus">BQ2027_MB1352C</name>
</gene>
<reference key="1">
    <citation type="journal article" date="2003" name="Proc. Natl. Acad. Sci. U.S.A.">
        <title>The complete genome sequence of Mycobacterium bovis.</title>
        <authorList>
            <person name="Garnier T."/>
            <person name="Eiglmeier K."/>
            <person name="Camus J.-C."/>
            <person name="Medina N."/>
            <person name="Mansoor H."/>
            <person name="Pryor M."/>
            <person name="Duthoy S."/>
            <person name="Grondin S."/>
            <person name="Lacroix C."/>
            <person name="Monsempe C."/>
            <person name="Simon S."/>
            <person name="Harris B."/>
            <person name="Atkin R."/>
            <person name="Doggett J."/>
            <person name="Mayes R."/>
            <person name="Keating L."/>
            <person name="Wheeler P.R."/>
            <person name="Parkhill J."/>
            <person name="Barrell B.G."/>
            <person name="Cole S.T."/>
            <person name="Gordon S.V."/>
            <person name="Hewinson R.G."/>
        </authorList>
    </citation>
    <scope>NUCLEOTIDE SEQUENCE [LARGE SCALE GENOMIC DNA]</scope>
    <source>
        <strain>ATCC BAA-935 / AF2122/97</strain>
    </source>
</reference>
<reference key="2">
    <citation type="journal article" date="2017" name="Genome Announc.">
        <title>Updated reference genome sequence and annotation of Mycobacterium bovis AF2122/97.</title>
        <authorList>
            <person name="Malone K.M."/>
            <person name="Farrell D."/>
            <person name="Stuber T.P."/>
            <person name="Schubert O.T."/>
            <person name="Aebersold R."/>
            <person name="Robbe-Austerman S."/>
            <person name="Gordon S.V."/>
        </authorList>
    </citation>
    <scope>NUCLEOTIDE SEQUENCE [LARGE SCALE GENOMIC DNA]</scope>
    <scope>GENOME REANNOTATION</scope>
    <source>
        <strain>ATCC BAA-935 / AF2122/97</strain>
    </source>
</reference>
<comment type="subcellular location">
    <subcellularLocation>
        <location evidence="4">Cell membrane</location>
        <topology evidence="4">Multi-pass membrane protein</topology>
    </subcellularLocation>
</comment>
<comment type="similarity">
    <text evidence="4">Belongs to the adenylyl cyclase class-3 family.</text>
</comment>
<feature type="chain" id="PRO_0000195751" description="Uncharacterized protein Mb1352c">
    <location>
        <begin position="1"/>
        <end position="541"/>
    </location>
</feature>
<feature type="transmembrane region" description="Helical" evidence="1">
    <location>
        <begin position="57"/>
        <end position="77"/>
    </location>
</feature>
<feature type="transmembrane region" description="Helical" evidence="1">
    <location>
        <begin position="90"/>
        <end position="110"/>
    </location>
</feature>
<feature type="transmembrane region" description="Helical" evidence="1">
    <location>
        <begin position="144"/>
        <end position="164"/>
    </location>
</feature>
<feature type="transmembrane region" description="Helical" evidence="1">
    <location>
        <begin position="167"/>
        <end position="187"/>
    </location>
</feature>
<feature type="transmembrane region" description="Helical" evidence="1">
    <location>
        <begin position="221"/>
        <end position="241"/>
    </location>
</feature>
<feature type="transmembrane region" description="Helical" evidence="1">
    <location>
        <begin position="257"/>
        <end position="277"/>
    </location>
</feature>
<feature type="domain" description="HAMP" evidence="3">
    <location>
        <begin position="278"/>
        <end position="329"/>
    </location>
</feature>
<feature type="domain" description="Guanylate cyclase" evidence="2">
    <location>
        <begin position="361"/>
        <end position="485"/>
    </location>
</feature>
<sequence length="541" mass="59332">MSAKKSTAQRLGRVLETVTRQSGRLPETPAYGSWLLGRVSESQRRRRVRIQVMLTALVVTANLLGIGVALLLVTIAIPEPSIVRDTPRWLTFGVVPGYVLLALALGSYALTRQTVQALRWAIEGRKPTREEERRTFLAPWRVAVGHLMFWGVGTALLTTLYGLINNAFIPRFLFAVSFCGVLVATATYLHTEFALRPFAAQALEAGPPPRRLAPGILGRTMVVWLLGSGVPVVGIALMAMFEMVLLNLTRMQFATGVLIISMVTLVFGFILMWILAWLTATPVRVVRAALRRVERGELRTNLVVFDGTELGELQRGFNAMVAGLRERERVRDLFGRHVGREVAAAAERERSKLGGEERHVAVVFIDIVGSTQLVTSRPPADVVKLLNKFFAIVVDEVDRHHGLVNKFEGDASLTIFGAPNRLPCPEDKALAAARAIADRLVNEMPECQAGIGVAAGQVIAGNVGARERFEYTVIGEPVNEAARLCELAKSRPGKLLASAQAVDAASEEERARWSLGRHVKLRGHDQPVRLAKPVGLTKPRR</sequence>
<name>Y1352_MYCBO</name>
<dbReference type="EMBL" id="LT708304">
    <property type="protein sequence ID" value="SIT99955.1"/>
    <property type="molecule type" value="Genomic_DNA"/>
</dbReference>
<dbReference type="RefSeq" id="NP_855006.1">
    <property type="nucleotide sequence ID" value="NC_002945.3"/>
</dbReference>
<dbReference type="RefSeq" id="WP_003406864.1">
    <property type="nucleotide sequence ID" value="NC_002945.4"/>
</dbReference>
<dbReference type="SMR" id="P63528"/>
<dbReference type="KEGG" id="mbo:BQ2027_MB1352C"/>
<dbReference type="PATRIC" id="fig|233413.5.peg.1482"/>
<dbReference type="Proteomes" id="UP000001419">
    <property type="component" value="Chromosome"/>
</dbReference>
<dbReference type="GO" id="GO:0005886">
    <property type="term" value="C:plasma membrane"/>
    <property type="evidence" value="ECO:0007669"/>
    <property type="project" value="UniProtKB-SubCell"/>
</dbReference>
<dbReference type="GO" id="GO:0004016">
    <property type="term" value="F:adenylate cyclase activity"/>
    <property type="evidence" value="ECO:0007669"/>
    <property type="project" value="UniProtKB-ARBA"/>
</dbReference>
<dbReference type="GO" id="GO:0006171">
    <property type="term" value="P:cAMP biosynthetic process"/>
    <property type="evidence" value="ECO:0007669"/>
    <property type="project" value="TreeGrafter"/>
</dbReference>
<dbReference type="GO" id="GO:0035556">
    <property type="term" value="P:intracellular signal transduction"/>
    <property type="evidence" value="ECO:0007669"/>
    <property type="project" value="InterPro"/>
</dbReference>
<dbReference type="CDD" id="cd07302">
    <property type="entry name" value="CHD"/>
    <property type="match status" value="1"/>
</dbReference>
<dbReference type="CDD" id="cd06225">
    <property type="entry name" value="HAMP"/>
    <property type="match status" value="1"/>
</dbReference>
<dbReference type="FunFam" id="3.30.70.1230:FF:000016">
    <property type="entry name" value="Adenylate/guanylate cyclase domain-containing protein"/>
    <property type="match status" value="1"/>
</dbReference>
<dbReference type="Gene3D" id="6.10.340.10">
    <property type="match status" value="1"/>
</dbReference>
<dbReference type="Gene3D" id="3.30.70.1230">
    <property type="entry name" value="Nucleotide cyclase"/>
    <property type="match status" value="1"/>
</dbReference>
<dbReference type="InterPro" id="IPR001054">
    <property type="entry name" value="A/G_cyclase"/>
</dbReference>
<dbReference type="InterPro" id="IPR050697">
    <property type="entry name" value="Adenylyl/Guanylyl_Cyclase_3/4"/>
</dbReference>
<dbReference type="InterPro" id="IPR003660">
    <property type="entry name" value="HAMP_dom"/>
</dbReference>
<dbReference type="InterPro" id="IPR029787">
    <property type="entry name" value="Nucleotide_cyclase"/>
</dbReference>
<dbReference type="PANTHER" id="PTHR43081">
    <property type="entry name" value="ADENYLATE CYCLASE, TERMINAL-DIFFERENTIATION SPECIFIC-RELATED"/>
    <property type="match status" value="1"/>
</dbReference>
<dbReference type="PANTHER" id="PTHR43081:SF17">
    <property type="entry name" value="BLL5647 PROTEIN"/>
    <property type="match status" value="1"/>
</dbReference>
<dbReference type="Pfam" id="PF00211">
    <property type="entry name" value="Guanylate_cyc"/>
    <property type="match status" value="1"/>
</dbReference>
<dbReference type="Pfam" id="PF00672">
    <property type="entry name" value="HAMP"/>
    <property type="match status" value="1"/>
</dbReference>
<dbReference type="SMART" id="SM00044">
    <property type="entry name" value="CYCc"/>
    <property type="match status" value="1"/>
</dbReference>
<dbReference type="SMART" id="SM00304">
    <property type="entry name" value="HAMP"/>
    <property type="match status" value="1"/>
</dbReference>
<dbReference type="SUPFAM" id="SSF158472">
    <property type="entry name" value="HAMP domain-like"/>
    <property type="match status" value="1"/>
</dbReference>
<dbReference type="SUPFAM" id="SSF55073">
    <property type="entry name" value="Nucleotide cyclase"/>
    <property type="match status" value="1"/>
</dbReference>
<dbReference type="PROSITE" id="PS50125">
    <property type="entry name" value="GUANYLATE_CYCLASE_2"/>
    <property type="match status" value="1"/>
</dbReference>
<dbReference type="PROSITE" id="PS50885">
    <property type="entry name" value="HAMP"/>
    <property type="match status" value="1"/>
</dbReference>
<protein>
    <recommendedName>
        <fullName>Uncharacterized protein Mb1352c</fullName>
    </recommendedName>
</protein>
<organism>
    <name type="scientific">Mycobacterium bovis (strain ATCC BAA-935 / AF2122/97)</name>
    <dbReference type="NCBI Taxonomy" id="233413"/>
    <lineage>
        <taxon>Bacteria</taxon>
        <taxon>Bacillati</taxon>
        <taxon>Actinomycetota</taxon>
        <taxon>Actinomycetes</taxon>
        <taxon>Mycobacteriales</taxon>
        <taxon>Mycobacteriaceae</taxon>
        <taxon>Mycobacterium</taxon>
        <taxon>Mycobacterium tuberculosis complex</taxon>
    </lineage>
</organism>